<keyword id="KW-0067">ATP-binding</keyword>
<keyword id="KW-0315">Glutamine amidotransferase</keyword>
<keyword id="KW-0332">GMP biosynthesis</keyword>
<keyword id="KW-0436">Ligase</keyword>
<keyword id="KW-0547">Nucleotide-binding</keyword>
<keyword id="KW-0658">Purine biosynthesis</keyword>
<keyword id="KW-1185">Reference proteome</keyword>
<name>GUAAA_NATPD</name>
<dbReference type="EC" id="6.3.5.2" evidence="1"/>
<dbReference type="EMBL" id="CR936257">
    <property type="protein sequence ID" value="CAI48401.1"/>
    <property type="molecule type" value="Genomic_DNA"/>
</dbReference>
<dbReference type="RefSeq" id="WP_011322037.1">
    <property type="nucleotide sequence ID" value="NC_007426.1"/>
</dbReference>
<dbReference type="SMR" id="Q3ITY2"/>
<dbReference type="STRING" id="348780.NP_0620A"/>
<dbReference type="MEROPS" id="C26.A31"/>
<dbReference type="EnsemblBacteria" id="CAI48401">
    <property type="protein sequence ID" value="CAI48401"/>
    <property type="gene ID" value="NP_0620A"/>
</dbReference>
<dbReference type="GeneID" id="3702780"/>
<dbReference type="KEGG" id="nph:NP_0620A"/>
<dbReference type="eggNOG" id="arCOG00087">
    <property type="taxonomic scope" value="Archaea"/>
</dbReference>
<dbReference type="HOGENOM" id="CLU_014340_1_4_2"/>
<dbReference type="OrthoDB" id="10772at2157"/>
<dbReference type="UniPathway" id="UPA00189">
    <property type="reaction ID" value="UER00296"/>
</dbReference>
<dbReference type="Proteomes" id="UP000002698">
    <property type="component" value="Chromosome"/>
</dbReference>
<dbReference type="GO" id="GO:0005829">
    <property type="term" value="C:cytosol"/>
    <property type="evidence" value="ECO:0007669"/>
    <property type="project" value="TreeGrafter"/>
</dbReference>
<dbReference type="GO" id="GO:0005524">
    <property type="term" value="F:ATP binding"/>
    <property type="evidence" value="ECO:0007669"/>
    <property type="project" value="UniProtKB-KW"/>
</dbReference>
<dbReference type="GO" id="GO:0003921">
    <property type="term" value="F:GMP synthase activity"/>
    <property type="evidence" value="ECO:0007669"/>
    <property type="project" value="TreeGrafter"/>
</dbReference>
<dbReference type="CDD" id="cd01742">
    <property type="entry name" value="GATase1_GMP_Synthase"/>
    <property type="match status" value="1"/>
</dbReference>
<dbReference type="FunFam" id="3.40.50.880:FF:000047">
    <property type="entry name" value="GMP synthase [glutamine-hydrolyzing] subunit A"/>
    <property type="match status" value="1"/>
</dbReference>
<dbReference type="Gene3D" id="3.40.50.880">
    <property type="match status" value="1"/>
</dbReference>
<dbReference type="HAMAP" id="MF_01510">
    <property type="entry name" value="GMP_synthase_A"/>
    <property type="match status" value="1"/>
</dbReference>
<dbReference type="InterPro" id="IPR029062">
    <property type="entry name" value="Class_I_gatase-like"/>
</dbReference>
<dbReference type="InterPro" id="IPR017926">
    <property type="entry name" value="GATASE"/>
</dbReference>
<dbReference type="InterPro" id="IPR004739">
    <property type="entry name" value="GMP_synth_GATase"/>
</dbReference>
<dbReference type="InterPro" id="IPR023686">
    <property type="entry name" value="GMP_synthase_A"/>
</dbReference>
<dbReference type="NCBIfam" id="TIGR00888">
    <property type="entry name" value="guaA_Nterm"/>
    <property type="match status" value="1"/>
</dbReference>
<dbReference type="NCBIfam" id="NF001975">
    <property type="entry name" value="PRK00758.1"/>
    <property type="match status" value="1"/>
</dbReference>
<dbReference type="PANTHER" id="PTHR11922:SF2">
    <property type="entry name" value="GMP SYNTHASE [GLUTAMINE-HYDROLYZING]"/>
    <property type="match status" value="1"/>
</dbReference>
<dbReference type="PANTHER" id="PTHR11922">
    <property type="entry name" value="GMP SYNTHASE-RELATED"/>
    <property type="match status" value="1"/>
</dbReference>
<dbReference type="Pfam" id="PF00117">
    <property type="entry name" value="GATase"/>
    <property type="match status" value="1"/>
</dbReference>
<dbReference type="PRINTS" id="PR00097">
    <property type="entry name" value="ANTSNTHASEII"/>
</dbReference>
<dbReference type="PRINTS" id="PR00096">
    <property type="entry name" value="GATASE"/>
</dbReference>
<dbReference type="SUPFAM" id="SSF52317">
    <property type="entry name" value="Class I glutamine amidotransferase-like"/>
    <property type="match status" value="1"/>
</dbReference>
<dbReference type="PROSITE" id="PS51273">
    <property type="entry name" value="GATASE_TYPE_1"/>
    <property type="match status" value="1"/>
</dbReference>
<gene>
    <name evidence="1" type="primary">guaAA</name>
    <name type="ordered locus">NP_0620A</name>
</gene>
<comment type="function">
    <text evidence="1">Catalyzes the synthesis of GMP from XMP.</text>
</comment>
<comment type="catalytic activity">
    <reaction evidence="1">
        <text>XMP + L-glutamine + ATP + H2O = GMP + L-glutamate + AMP + diphosphate + 2 H(+)</text>
        <dbReference type="Rhea" id="RHEA:11680"/>
        <dbReference type="ChEBI" id="CHEBI:15377"/>
        <dbReference type="ChEBI" id="CHEBI:15378"/>
        <dbReference type="ChEBI" id="CHEBI:29985"/>
        <dbReference type="ChEBI" id="CHEBI:30616"/>
        <dbReference type="ChEBI" id="CHEBI:33019"/>
        <dbReference type="ChEBI" id="CHEBI:57464"/>
        <dbReference type="ChEBI" id="CHEBI:58115"/>
        <dbReference type="ChEBI" id="CHEBI:58359"/>
        <dbReference type="ChEBI" id="CHEBI:456215"/>
        <dbReference type="EC" id="6.3.5.2"/>
    </reaction>
</comment>
<comment type="pathway">
    <text evidence="1">Purine metabolism; GMP biosynthesis; GMP from XMP (L-Gln route): step 1/1.</text>
</comment>
<comment type="subunit">
    <text evidence="1">Heterodimer composed of a glutamine amidotransferase subunit (A) and a GMP-binding subunit (B).</text>
</comment>
<evidence type="ECO:0000255" key="1">
    <source>
        <dbReference type="HAMAP-Rule" id="MF_01510"/>
    </source>
</evidence>
<proteinExistence type="inferred from homology"/>
<accession>Q3ITY2</accession>
<sequence length="184" mass="19991">MTRIVVVDNHGQFTHLEHRALRDLGVDTELIDNDTPPEEIDADGIVLSGGPDMDRIGHSPAYLDLDIPVLGICLGMQLMAAELGGRVGAGDYGGYADVTVSIEDESDPLIGSLAPETRVWASHADEVKELPDGFERTATSEVCNIEAMSDTDRNRYGVQWHPEVAHTEAGEEVFENFRDICAGD</sequence>
<organism>
    <name type="scientific">Natronomonas pharaonis (strain ATCC 35678 / DSM 2160 / CIP 103997 / JCM 8858 / NBRC 14720 / NCIMB 2260 / Gabara)</name>
    <name type="common">Halobacterium pharaonis</name>
    <dbReference type="NCBI Taxonomy" id="348780"/>
    <lineage>
        <taxon>Archaea</taxon>
        <taxon>Methanobacteriati</taxon>
        <taxon>Methanobacteriota</taxon>
        <taxon>Stenosarchaea group</taxon>
        <taxon>Halobacteria</taxon>
        <taxon>Halobacteriales</taxon>
        <taxon>Haloarculaceae</taxon>
        <taxon>Natronomonas</taxon>
    </lineage>
</organism>
<reference key="1">
    <citation type="journal article" date="2005" name="Genome Res.">
        <title>Living with two extremes: conclusions from the genome sequence of Natronomonas pharaonis.</title>
        <authorList>
            <person name="Falb M."/>
            <person name="Pfeiffer F."/>
            <person name="Palm P."/>
            <person name="Rodewald K."/>
            <person name="Hickmann V."/>
            <person name="Tittor J."/>
            <person name="Oesterhelt D."/>
        </authorList>
    </citation>
    <scope>NUCLEOTIDE SEQUENCE [LARGE SCALE GENOMIC DNA]</scope>
    <source>
        <strain>ATCC 35678 / DSM 2160 / CIP 103997 / JCM 8858 / NBRC 14720 / NCIMB 2260 / Gabara</strain>
    </source>
</reference>
<feature type="chain" id="PRO_0000140226" description="GMP synthase [glutamine-hydrolyzing] subunit A">
    <location>
        <begin position="1"/>
        <end position="184"/>
    </location>
</feature>
<feature type="domain" description="Glutamine amidotransferase type-1" evidence="1">
    <location>
        <begin position="3"/>
        <end position="184"/>
    </location>
</feature>
<feature type="active site" description="Nucleophile" evidence="1">
    <location>
        <position position="73"/>
    </location>
</feature>
<feature type="active site" evidence="1">
    <location>
        <position position="161"/>
    </location>
</feature>
<feature type="active site" evidence="1">
    <location>
        <position position="163"/>
    </location>
</feature>
<protein>
    <recommendedName>
        <fullName evidence="1">GMP synthase [glutamine-hydrolyzing] subunit A</fullName>
        <ecNumber evidence="1">6.3.5.2</ecNumber>
    </recommendedName>
    <alternativeName>
        <fullName evidence="1">Glutamine amidotransferase</fullName>
    </alternativeName>
</protein>